<evidence type="ECO:0000250" key="1"/>
<evidence type="ECO:0000305" key="2"/>
<keyword id="KW-1185">Reference proteome</keyword>
<keyword id="KW-0687">Ribonucleoprotein</keyword>
<keyword id="KW-0689">Ribosomal protein</keyword>
<keyword id="KW-0694">RNA-binding</keyword>
<keyword id="KW-0699">rRNA-binding</keyword>
<reference key="1">
    <citation type="journal article" date="1998" name="Nature">
        <title>The complete genome of the hyperthermophilic bacterium Aquifex aeolicus.</title>
        <authorList>
            <person name="Deckert G."/>
            <person name="Warren P.V."/>
            <person name="Gaasterland T."/>
            <person name="Young W.G."/>
            <person name="Lenox A.L."/>
            <person name="Graham D.E."/>
            <person name="Overbeek R."/>
            <person name="Snead M.A."/>
            <person name="Keller M."/>
            <person name="Aujay M."/>
            <person name="Huber R."/>
            <person name="Feldman R.A."/>
            <person name="Short J.M."/>
            <person name="Olsen G.J."/>
            <person name="Swanson R.V."/>
        </authorList>
    </citation>
    <scope>NUCLEOTIDE SEQUENCE [LARGE SCALE GENOMIC DNA]</scope>
    <source>
        <strain>VF5</strain>
    </source>
</reference>
<proteinExistence type="inferred from homology"/>
<protein>
    <recommendedName>
        <fullName evidence="2">Large ribosomal subunit protein uL10</fullName>
    </recommendedName>
    <alternativeName>
        <fullName>50S ribosomal protein L10</fullName>
    </alternativeName>
</protein>
<sequence>MAEFDKEAYAERERSAASRKTLLKKQELVNSYKERLQKSNGFVIFFNFQGIDAYPLTLLRLDIKDLKGEIVVGKNTLFYRAFSDTVLSDHRDIFVGPTAALFAYEDPVAVTKKLVEFLKETFDKEWEGRIKGGLLDYKYITPEQVKELAELPSKEELIAKLLGVLMAPVTQLAMTLKAVPQKLVLVLKAIEEEKSKGGQ</sequence>
<feature type="chain" id="PRO_0000154579" description="Large ribosomal subunit protein uL10">
    <location>
        <begin position="1"/>
        <end position="199"/>
    </location>
</feature>
<gene>
    <name type="primary">rplJ</name>
    <name type="ordered locus">aq_1936</name>
</gene>
<organism>
    <name type="scientific">Aquifex aeolicus (strain VF5)</name>
    <dbReference type="NCBI Taxonomy" id="224324"/>
    <lineage>
        <taxon>Bacteria</taxon>
        <taxon>Pseudomonadati</taxon>
        <taxon>Aquificota</taxon>
        <taxon>Aquificia</taxon>
        <taxon>Aquificales</taxon>
        <taxon>Aquificaceae</taxon>
        <taxon>Aquifex</taxon>
    </lineage>
</organism>
<accession>O67760</accession>
<dbReference type="EMBL" id="AE000657">
    <property type="protein sequence ID" value="AAC07726.1"/>
    <property type="molecule type" value="Genomic_DNA"/>
</dbReference>
<dbReference type="PIR" id="D70466">
    <property type="entry name" value="D70466"/>
</dbReference>
<dbReference type="RefSeq" id="NP_214329.1">
    <property type="nucleotide sequence ID" value="NC_000918.1"/>
</dbReference>
<dbReference type="RefSeq" id="WP_010881265.1">
    <property type="nucleotide sequence ID" value="NC_000918.1"/>
</dbReference>
<dbReference type="SMR" id="O67760"/>
<dbReference type="FunCoup" id="O67760">
    <property type="interactions" value="481"/>
</dbReference>
<dbReference type="STRING" id="224324.aq_1936"/>
<dbReference type="EnsemblBacteria" id="AAC07726">
    <property type="protein sequence ID" value="AAC07726"/>
    <property type="gene ID" value="aq_1936"/>
</dbReference>
<dbReference type="KEGG" id="aae:aq_1936"/>
<dbReference type="PATRIC" id="fig|224324.8.peg.1499"/>
<dbReference type="eggNOG" id="COG0244">
    <property type="taxonomic scope" value="Bacteria"/>
</dbReference>
<dbReference type="HOGENOM" id="CLU_092227_1_2_0"/>
<dbReference type="InParanoid" id="O67760"/>
<dbReference type="OrthoDB" id="9808307at2"/>
<dbReference type="Proteomes" id="UP000000798">
    <property type="component" value="Chromosome"/>
</dbReference>
<dbReference type="GO" id="GO:0022625">
    <property type="term" value="C:cytosolic large ribosomal subunit"/>
    <property type="evidence" value="ECO:0000318"/>
    <property type="project" value="GO_Central"/>
</dbReference>
<dbReference type="GO" id="GO:0070180">
    <property type="term" value="F:large ribosomal subunit rRNA binding"/>
    <property type="evidence" value="ECO:0007669"/>
    <property type="project" value="UniProtKB-UniRule"/>
</dbReference>
<dbReference type="GO" id="GO:0003735">
    <property type="term" value="F:structural constituent of ribosome"/>
    <property type="evidence" value="ECO:0000318"/>
    <property type="project" value="GO_Central"/>
</dbReference>
<dbReference type="GO" id="GO:0006412">
    <property type="term" value="P:translation"/>
    <property type="evidence" value="ECO:0000318"/>
    <property type="project" value="GO_Central"/>
</dbReference>
<dbReference type="CDD" id="cd05797">
    <property type="entry name" value="Ribosomal_L10"/>
    <property type="match status" value="1"/>
</dbReference>
<dbReference type="Gene3D" id="3.30.70.1730">
    <property type="match status" value="1"/>
</dbReference>
<dbReference type="Gene3D" id="6.10.250.290">
    <property type="match status" value="1"/>
</dbReference>
<dbReference type="HAMAP" id="MF_00362">
    <property type="entry name" value="Ribosomal_uL10"/>
    <property type="match status" value="1"/>
</dbReference>
<dbReference type="InterPro" id="IPR001790">
    <property type="entry name" value="Ribosomal_uL10"/>
</dbReference>
<dbReference type="InterPro" id="IPR043141">
    <property type="entry name" value="Ribosomal_uL10-like_sf"/>
</dbReference>
<dbReference type="InterPro" id="IPR022973">
    <property type="entry name" value="Ribosomal_uL10_bac"/>
</dbReference>
<dbReference type="InterPro" id="IPR047865">
    <property type="entry name" value="Ribosomal_uL10_bac_type"/>
</dbReference>
<dbReference type="InterPro" id="IPR002363">
    <property type="entry name" value="Ribosomal_uL10_CS_bac"/>
</dbReference>
<dbReference type="NCBIfam" id="NF000955">
    <property type="entry name" value="PRK00099.1-1"/>
    <property type="match status" value="1"/>
</dbReference>
<dbReference type="PANTHER" id="PTHR11560">
    <property type="entry name" value="39S RIBOSOMAL PROTEIN L10, MITOCHONDRIAL"/>
    <property type="match status" value="1"/>
</dbReference>
<dbReference type="Pfam" id="PF00466">
    <property type="entry name" value="Ribosomal_L10"/>
    <property type="match status" value="1"/>
</dbReference>
<dbReference type="SUPFAM" id="SSF160369">
    <property type="entry name" value="Ribosomal protein L10-like"/>
    <property type="match status" value="1"/>
</dbReference>
<dbReference type="PROSITE" id="PS01109">
    <property type="entry name" value="RIBOSOMAL_L10"/>
    <property type="match status" value="1"/>
</dbReference>
<comment type="function">
    <text evidence="1">Forms part of the ribosomal stalk, playing a central role in the interaction of the ribosome with GTP-bound translation factors.</text>
</comment>
<comment type="subunit">
    <text evidence="1">Part of the ribosomal stalk of the 50S ribosomal subunit. The N-terminus interacts with L11 and the large rRNA to form the base of the stalk. The C-terminus forms an elongated spine to which L12 dimers bind in a sequential fashion forming a multimeric L10(L12)X complex (By similarity).</text>
</comment>
<comment type="similarity">
    <text evidence="2">Belongs to the universal ribosomal protein uL10 family.</text>
</comment>
<name>RL10_AQUAE</name>